<comment type="function">
    <text evidence="1">Accessory element involved in the expression of sarA and several virulence factors. Modulates SarA production and/or function in a strain-dependent manner. Affects the transcription of the accessory gene regulator (agr) and genes encoding virulence factors including alpha toxin (hla) and protein A (spa) (By similarity).</text>
</comment>
<comment type="subcellular location">
    <subcellularLocation>
        <location evidence="3">Cell membrane</location>
        <topology evidence="3">Multi-pass membrane protein</topology>
    </subcellularLocation>
</comment>
<name>MSA_STAAS</name>
<evidence type="ECO:0000250" key="1"/>
<evidence type="ECO:0000255" key="2"/>
<evidence type="ECO:0000305" key="3"/>
<feature type="chain" id="PRO_0000253062" description="Protein msa">
    <location>
        <begin position="1"/>
        <end position="133"/>
    </location>
</feature>
<feature type="transmembrane region" description="Helical" evidence="2">
    <location>
        <begin position="3"/>
        <end position="23"/>
    </location>
</feature>
<feature type="transmembrane region" description="Helical" evidence="2">
    <location>
        <begin position="27"/>
        <end position="47"/>
    </location>
</feature>
<feature type="transmembrane region" description="Helical" evidence="2">
    <location>
        <begin position="55"/>
        <end position="75"/>
    </location>
</feature>
<feature type="transmembrane region" description="Helical" evidence="2">
    <location>
        <begin position="103"/>
        <end position="123"/>
    </location>
</feature>
<sequence>MKYLILSLVANLLVFGVLSAIGLNINILAAMMIVLVIPIMISGILFFKTNIDKTYIFFNIIFIDFYYYIYNVHLMTLPKFNNYIKAEMMELEDIDVLITSKDFGFDEILFYTLYLLLILIVLYYLKKQVKHKI</sequence>
<protein>
    <recommendedName>
        <fullName>Protein msa</fullName>
    </recommendedName>
    <alternativeName>
        <fullName>Modulator of SarA</fullName>
    </alternativeName>
</protein>
<reference key="1">
    <citation type="journal article" date="2004" name="Proc. Natl. Acad. Sci. U.S.A.">
        <title>Complete genomes of two clinical Staphylococcus aureus strains: evidence for the rapid evolution of virulence and drug resistance.</title>
        <authorList>
            <person name="Holden M.T.G."/>
            <person name="Feil E.J."/>
            <person name="Lindsay J.A."/>
            <person name="Peacock S.J."/>
            <person name="Day N.P.J."/>
            <person name="Enright M.C."/>
            <person name="Foster T.J."/>
            <person name="Moore C.E."/>
            <person name="Hurst L."/>
            <person name="Atkin R."/>
            <person name="Barron A."/>
            <person name="Bason N."/>
            <person name="Bentley S.D."/>
            <person name="Chillingworth C."/>
            <person name="Chillingworth T."/>
            <person name="Churcher C."/>
            <person name="Clark L."/>
            <person name="Corton C."/>
            <person name="Cronin A."/>
            <person name="Doggett J."/>
            <person name="Dowd L."/>
            <person name="Feltwell T."/>
            <person name="Hance Z."/>
            <person name="Harris B."/>
            <person name="Hauser H."/>
            <person name="Holroyd S."/>
            <person name="Jagels K."/>
            <person name="James K.D."/>
            <person name="Lennard N."/>
            <person name="Line A."/>
            <person name="Mayes R."/>
            <person name="Moule S."/>
            <person name="Mungall K."/>
            <person name="Ormond D."/>
            <person name="Quail M.A."/>
            <person name="Rabbinowitsch E."/>
            <person name="Rutherford K.M."/>
            <person name="Sanders M."/>
            <person name="Sharp S."/>
            <person name="Simmonds M."/>
            <person name="Stevens K."/>
            <person name="Whitehead S."/>
            <person name="Barrell B.G."/>
            <person name="Spratt B.G."/>
            <person name="Parkhill J."/>
        </authorList>
    </citation>
    <scope>NUCLEOTIDE SEQUENCE [LARGE SCALE GENOMIC DNA]</scope>
    <source>
        <strain>MSSA476</strain>
    </source>
</reference>
<gene>
    <name type="primary">msa</name>
    <name type="ordered locus">SAS1342</name>
</gene>
<proteinExistence type="inferred from homology"/>
<organism>
    <name type="scientific">Staphylococcus aureus (strain MSSA476)</name>
    <dbReference type="NCBI Taxonomy" id="282459"/>
    <lineage>
        <taxon>Bacteria</taxon>
        <taxon>Bacillati</taxon>
        <taxon>Bacillota</taxon>
        <taxon>Bacilli</taxon>
        <taxon>Bacillales</taxon>
        <taxon>Staphylococcaceae</taxon>
        <taxon>Staphylococcus</taxon>
    </lineage>
</organism>
<dbReference type="EMBL" id="BX571857">
    <property type="protein sequence ID" value="CAG43118.1"/>
    <property type="molecule type" value="Genomic_DNA"/>
</dbReference>
<dbReference type="RefSeq" id="WP_000876201.1">
    <property type="nucleotide sequence ID" value="NC_002953.3"/>
</dbReference>
<dbReference type="SMR" id="Q6G9G0"/>
<dbReference type="KEGG" id="sas:SAS1342"/>
<dbReference type="HOGENOM" id="CLU_157294_0_0_9"/>
<dbReference type="GO" id="GO:0005886">
    <property type="term" value="C:plasma membrane"/>
    <property type="evidence" value="ECO:0007669"/>
    <property type="project" value="UniProtKB-SubCell"/>
</dbReference>
<dbReference type="NCBIfam" id="NF038270">
    <property type="entry name" value="membran_MsaC"/>
    <property type="match status" value="1"/>
</dbReference>
<keyword id="KW-1003">Cell membrane</keyword>
<keyword id="KW-0472">Membrane</keyword>
<keyword id="KW-0812">Transmembrane</keyword>
<keyword id="KW-1133">Transmembrane helix</keyword>
<accession>Q6G9G0</accession>